<sequence>MSLEDSLRSLSLDYLNLLINGQAFSDVTFSVEGRLVHAHRCILAARSLFFRKFFCGPDPPPPSGNLDSPGGPRVNSPRPGGVIPVNSVGYEVFLLMLQFLYSGQVSIVPQKHEPRPNCGERACWHTHCTSAVDLALDTLAAARYFGVEQLALLTQKQLASMVEKASIEDVMKVLLASRKQDMHQLWTTCSHLVAKSGLPPEVLAKHLPIDIVAKIEELRLKSTLARRSLIPHHHHHHHHHGHHDMGAAADLEDQKIRRMRRALDSSDVELVKLMVMGEGLNLDEALALPYAVENCSREVVKALLELGAADVNYPSGPSGKTPLHIAAEMVSPDMVAVLLDHHADPNVRTVDGVTPLDILRTLTSDFLFKGAVPGLTHIEPNKLRLCLELVQSAALVMSREEGNANANSSNNNNAPCSAATPIYPPMNEDHNSSSSNANLNLDSRLVYLNLGAAQMSGDDDSSHGSHREAMNQAMYHHHHSHDY</sequence>
<reference key="1">
    <citation type="journal article" date="2012" name="Plant Cell">
        <title>NODULE ROOT and COCHLEATA maintain nodule development and are legume orthologs of Arabidopsis BLADE-ON-PETIOLE genes.</title>
        <authorList>
            <person name="Couzigou J.-M."/>
            <person name="Zhukov V."/>
            <person name="Mondy S."/>
            <person name="Abu El Heba G."/>
            <person name="Cosson V."/>
            <person name="Ellis T.H.N."/>
            <person name="Ambrose M."/>
            <person name="Wen J."/>
            <person name="Tadege M."/>
            <person name="Tikhonovich I."/>
            <person name="Mysore K.S."/>
            <person name="Putterill J."/>
            <person name="Hofer J."/>
            <person name="Borisov A.Y."/>
            <person name="Ratet P."/>
        </authorList>
    </citation>
    <scope>NUCLEOTIDE SEQUENCE [MRNA]</scope>
</reference>
<reference key="2">
    <citation type="journal article" date="2018" name="Plant Growth Regul.">
        <title>LjCOCH interplays with LjAPP1 to maintain the nodule development in Lotus japonicus.</title>
        <authorList>
            <person name="Liu Y.-C."/>
            <person name="Lei Y.-W."/>
            <person name="Liu W."/>
            <person name="Weng L."/>
            <person name="Lei M.-J."/>
            <person name="Hu X.-H."/>
            <person name="Dong Z."/>
            <person name="Luo D."/>
            <person name="Yang J."/>
        </authorList>
    </citation>
    <scope>NUCLEOTIDE SEQUENCE [MRNA]</scope>
    <scope>FUNCTION</scope>
    <scope>DISRUPTION PHENOTYPE</scope>
    <scope>INTERACTION WITH APP1</scope>
    <scope>HOMODIMERIZATION</scope>
    <scope>SUBCELLULAR LOCATION</scope>
    <scope>INDUCTION BY MESORHIZOBIUM LOTI</scope>
    <scope>TISSUE SPECIFICITY</scope>
    <scope>DEVELOPMENTAL STAGE</scope>
    <source>
        <strain>cv. Gifu B-129</strain>
    </source>
</reference>
<reference key="3">
    <citation type="journal article" date="2016" name="New Phytol.">
        <title>The legume NOOT-BOP-COCH-LIKE genes are conserved regulators of abscission, a major agronomical trait in cultivated crops.</title>
        <authorList>
            <person name="Couzigou J.-M."/>
            <person name="Magne K."/>
            <person name="Mondy S."/>
            <person name="Cosson V."/>
            <person name="Clements J."/>
            <person name="Ratet P."/>
        </authorList>
    </citation>
    <scope>FUNCTION</scope>
    <scope>DISRUPTION PHENOTYPE</scope>
</reference>
<gene>
    <name evidence="10" type="primary">NBCL</name>
    <name evidence="9" type="synonym">BOP2</name>
    <name evidence="11" type="synonym">COCH</name>
</gene>
<proteinExistence type="evidence at protein level"/>
<evidence type="ECO:0000250" key="1">
    <source>
        <dbReference type="UniProtKB" id="O22286"/>
    </source>
</evidence>
<evidence type="ECO:0000250" key="2">
    <source>
        <dbReference type="UniProtKB" id="Q2HW56"/>
    </source>
</evidence>
<evidence type="ECO:0000255" key="3"/>
<evidence type="ECO:0000255" key="4">
    <source>
        <dbReference type="PROSITE-ProRule" id="PRU00037"/>
    </source>
</evidence>
<evidence type="ECO:0000255" key="5">
    <source>
        <dbReference type="PROSITE-ProRule" id="PRU01391"/>
    </source>
</evidence>
<evidence type="ECO:0000256" key="6">
    <source>
        <dbReference type="SAM" id="MobiDB-lite"/>
    </source>
</evidence>
<evidence type="ECO:0000269" key="7">
    <source>
    </source>
</evidence>
<evidence type="ECO:0000269" key="8">
    <source ref="2"/>
</evidence>
<evidence type="ECO:0000303" key="9">
    <source>
    </source>
</evidence>
<evidence type="ECO:0000303" key="10">
    <source>
    </source>
</evidence>
<evidence type="ECO:0000303" key="11">
    <source ref="2"/>
</evidence>
<evidence type="ECO:0000305" key="12"/>
<evidence type="ECO:0000305" key="13">
    <source>
    </source>
</evidence>
<evidence type="ECO:0000305" key="14">
    <source ref="2"/>
</evidence>
<keyword id="KW-0040">ANK repeat</keyword>
<keyword id="KW-1003">Cell membrane</keyword>
<keyword id="KW-0963">Cytoplasm</keyword>
<keyword id="KW-0472">Membrane</keyword>
<keyword id="KW-0479">Metal-binding</keyword>
<keyword id="KW-0536">Nodulation</keyword>
<keyword id="KW-0539">Nucleus</keyword>
<keyword id="KW-0677">Repeat</keyword>
<keyword id="KW-0833">Ubl conjugation pathway</keyword>
<keyword id="KW-0862">Zinc</keyword>
<keyword id="KW-0863">Zinc-finger</keyword>
<name>NBCL_LOTJA</name>
<dbReference type="EMBL" id="JN408495">
    <property type="protein sequence ID" value="AEM62768.1"/>
    <property type="molecule type" value="mRNA"/>
</dbReference>
<dbReference type="EMBL" id="MF503679">
    <property type="protein sequence ID" value="AXC25271.1"/>
    <property type="molecule type" value="mRNA"/>
</dbReference>
<dbReference type="SMR" id="G3LSH3"/>
<dbReference type="OMA" id="PNVRTMD"/>
<dbReference type="OrthoDB" id="45365at2759"/>
<dbReference type="UniPathway" id="UPA00143"/>
<dbReference type="GO" id="GO:0005737">
    <property type="term" value="C:cytoplasm"/>
    <property type="evidence" value="ECO:0000314"/>
    <property type="project" value="UniProtKB"/>
</dbReference>
<dbReference type="GO" id="GO:0019897">
    <property type="term" value="C:extrinsic component of plasma membrane"/>
    <property type="evidence" value="ECO:0000314"/>
    <property type="project" value="UniProtKB"/>
</dbReference>
<dbReference type="GO" id="GO:0005634">
    <property type="term" value="C:nucleus"/>
    <property type="evidence" value="ECO:0000314"/>
    <property type="project" value="UniProtKB"/>
</dbReference>
<dbReference type="GO" id="GO:0042803">
    <property type="term" value="F:protein homodimerization activity"/>
    <property type="evidence" value="ECO:0000314"/>
    <property type="project" value="UniProtKB"/>
</dbReference>
<dbReference type="GO" id="GO:0000976">
    <property type="term" value="F:transcription cis-regulatory region binding"/>
    <property type="evidence" value="ECO:0007669"/>
    <property type="project" value="TreeGrafter"/>
</dbReference>
<dbReference type="GO" id="GO:0008270">
    <property type="term" value="F:zinc ion binding"/>
    <property type="evidence" value="ECO:0007669"/>
    <property type="project" value="UniProtKB-KW"/>
</dbReference>
<dbReference type="GO" id="GO:0009864">
    <property type="term" value="P:induced systemic resistance, jasmonic acid mediated signaling pathway"/>
    <property type="evidence" value="ECO:0007669"/>
    <property type="project" value="TreeGrafter"/>
</dbReference>
<dbReference type="GO" id="GO:0009877">
    <property type="term" value="P:nodulation"/>
    <property type="evidence" value="ECO:0000315"/>
    <property type="project" value="UniProtKB"/>
</dbReference>
<dbReference type="GO" id="GO:0099402">
    <property type="term" value="P:plant organ development"/>
    <property type="evidence" value="ECO:0007669"/>
    <property type="project" value="InterPro"/>
</dbReference>
<dbReference type="GO" id="GO:0006355">
    <property type="term" value="P:regulation of DNA-templated transcription"/>
    <property type="evidence" value="ECO:0007669"/>
    <property type="project" value="TreeGrafter"/>
</dbReference>
<dbReference type="GO" id="GO:0009609">
    <property type="term" value="P:response to symbiotic bacterium"/>
    <property type="evidence" value="ECO:0000270"/>
    <property type="project" value="UniProtKB"/>
</dbReference>
<dbReference type="CDD" id="cd18310">
    <property type="entry name" value="BTB_POZ_NPR_plant"/>
    <property type="match status" value="1"/>
</dbReference>
<dbReference type="FunFam" id="3.30.710.10:FF:000084">
    <property type="entry name" value="regulatory protein NPR5 isoform X1"/>
    <property type="match status" value="1"/>
</dbReference>
<dbReference type="FunFam" id="1.25.40.20:FF:000058">
    <property type="entry name" value="regulatory protein NPR5 isoform X2"/>
    <property type="match status" value="1"/>
</dbReference>
<dbReference type="Gene3D" id="1.25.40.20">
    <property type="entry name" value="Ankyrin repeat-containing domain"/>
    <property type="match status" value="1"/>
</dbReference>
<dbReference type="Gene3D" id="3.30.710.10">
    <property type="entry name" value="Potassium Channel Kv1.1, Chain A"/>
    <property type="match status" value="1"/>
</dbReference>
<dbReference type="InterPro" id="IPR002110">
    <property type="entry name" value="Ankyrin_rpt"/>
</dbReference>
<dbReference type="InterPro" id="IPR036770">
    <property type="entry name" value="Ankyrin_rpt-contain_sf"/>
</dbReference>
<dbReference type="InterPro" id="IPR000210">
    <property type="entry name" value="BTB/POZ_dom"/>
</dbReference>
<dbReference type="InterPro" id="IPR044284">
    <property type="entry name" value="NPR5/6"/>
</dbReference>
<dbReference type="InterPro" id="IPR024228">
    <property type="entry name" value="NPR_central_dom"/>
</dbReference>
<dbReference type="InterPro" id="IPR011333">
    <property type="entry name" value="SKP1/BTB/POZ_sf"/>
</dbReference>
<dbReference type="PANTHER" id="PTHR46668">
    <property type="entry name" value="BTB/POZ DOMAIN AND ANKYRIN REPEAT-CONTAINING PROTEIN NH5.2"/>
    <property type="match status" value="1"/>
</dbReference>
<dbReference type="PANTHER" id="PTHR46668:SF1">
    <property type="entry name" value="REGULATORY PROTEIN NPR5"/>
    <property type="match status" value="1"/>
</dbReference>
<dbReference type="Pfam" id="PF12796">
    <property type="entry name" value="Ank_2"/>
    <property type="match status" value="1"/>
</dbReference>
<dbReference type="Pfam" id="PF00651">
    <property type="entry name" value="BTB"/>
    <property type="match status" value="1"/>
</dbReference>
<dbReference type="Pfam" id="PF11900">
    <property type="entry name" value="DUF3420"/>
    <property type="match status" value="1"/>
</dbReference>
<dbReference type="SMART" id="SM00248">
    <property type="entry name" value="ANK"/>
    <property type="match status" value="2"/>
</dbReference>
<dbReference type="SMART" id="SM00225">
    <property type="entry name" value="BTB"/>
    <property type="match status" value="1"/>
</dbReference>
<dbReference type="SUPFAM" id="SSF48403">
    <property type="entry name" value="Ankyrin repeat"/>
    <property type="match status" value="1"/>
</dbReference>
<dbReference type="SUPFAM" id="SSF54695">
    <property type="entry name" value="POZ domain"/>
    <property type="match status" value="1"/>
</dbReference>
<dbReference type="PROSITE" id="PS50297">
    <property type="entry name" value="ANK_REP_REGION"/>
    <property type="match status" value="1"/>
</dbReference>
<dbReference type="PROSITE" id="PS50088">
    <property type="entry name" value="ANK_REPEAT"/>
    <property type="match status" value="1"/>
</dbReference>
<dbReference type="PROSITE" id="PS50097">
    <property type="entry name" value="BTB"/>
    <property type="match status" value="1"/>
</dbReference>
<dbReference type="PROSITE" id="PS52046">
    <property type="entry name" value="ZF_C2HC_NPR"/>
    <property type="match status" value="1"/>
</dbReference>
<protein>
    <recommendedName>
        <fullName>BTB/POZ domain and ankyrin repeat-containing protein NBCL</fullName>
    </recommendedName>
    <alternativeName>
        <fullName evidence="11">COCHLEATA-like protein</fullName>
        <shortName evidence="11">LjCOCH</shortName>
    </alternativeName>
    <alternativeName>
        <fullName evidence="10">NOOT-BOP-COCH-like protein</fullName>
        <shortName evidence="10">Lj-NBCL</shortName>
    </alternativeName>
    <alternativeName>
        <fullName evidence="9">Protein BLADE-ON-PETIOLE 2</fullName>
        <shortName evidence="9">LjBOP</shortName>
    </alternativeName>
</protein>
<comment type="function">
    <text evidence="1 2 7 8">May act as a substrate-specific adapter of an E3 ubiquitin-protein ligase complex (CUL3-RBX1-BTB) which mediates the ubiquitination and subsequent proteasomal degradation of target proteins (By similarity). Transcriptional co-regulator involved in the promotion of leaf and floral meristem fate and determinacy (PubMed:26390061, Ref.2). Required for the abscission of senescent organs, probably by regulating the cell wall disorganization in abscission zones (AZs, e.g. pulvini at the base of leaves) (PubMed:26390061). Involved in the coordination of the symbiotic nodule developmental program; promotes the formation of root nodules by interacting directly with APP1 to modulate the expression of the nuclear transcription factor Y subunit (NF-YA1), a key nodulin (Ref.2). Necessary for the robust maintenance of nodule identity throughout the nodule developmental program (By similarity).</text>
</comment>
<comment type="pathway">
    <text evidence="1">Protein modification; protein ubiquitination.</text>
</comment>
<comment type="subunit">
    <text evidence="8">Homodimer (Ref.2). Interacts with APP1 around the plasma membrane and in the nucleus; this interaction disturbs APP1-mediated regulation of the nuclear transcription factor Y subunit (NF-YA1) (Ref.2).</text>
</comment>
<comment type="subcellular location">
    <subcellularLocation>
        <location evidence="8">Nucleus</location>
    </subcellularLocation>
    <subcellularLocation>
        <location evidence="8">Cytoplasm</location>
    </subcellularLocation>
    <subcellularLocation>
        <location evidence="8">Cell membrane</location>
        <topology evidence="8">Peripheral membrane protein</topology>
        <orientation evidence="8">Cytoplasmic side</orientation>
    </subcellularLocation>
</comment>
<comment type="tissue specificity">
    <text evidence="8">Mainly expressed in root nodules, to a lesser extent in shoot apical meristems (SAM) and root meristems (RM), and barely in leaves, non-nodulating roots and root apical meristems (RAM).</text>
</comment>
<comment type="developmental stage">
    <text evidence="8">After rhizobia inoculation, accumulates around the infection zone and nodule vascular bundles in developing root nodules (Ref.2). During compound leaf and flower development, mainly expressed at the basal region of leaf and stipule primordia during vegetative stage, then in the floral meristems and floral organ primordia at reproductive stage (Ref.2).</text>
</comment>
<comment type="induction">
    <text evidence="8">Accumulates after rhizobial inoculation with M.loti, peaking after two weeks and leading to the formation of root nodules.</text>
</comment>
<comment type="domain">
    <text evidence="1">The BTB/POZ domain mediates the interaction with some component of ubiquitin ligase complexes.</text>
</comment>
<comment type="disruption phenotype">
    <text evidence="7 8">Normal stem and root length (Ref.2). The Ljnbcl mutant exhibits many developmental defects including strong modification of flower development (i.e. abnormal floral zygomorphy with symmetric lateral and ventral petals and altered floral organs number) leading to almost complete sterility (PubMed:26390061, Ref.2). Altered abscission of senescing leaves, of corolla and reproductive organs in aborted flowers, and of petals in developing fruits, even after complete pod senescence and dehiscence (PubMed:26390061). Severe defects in root nodules organogenesis are observed in the mutant Ljcoch in the presence of M.loti, leading to reduced number of mature nodules and accompanied with abnormal nodule lenticels and vascular bundle developmental defects, and probably due to a slight down-regulation of nodulins expression (e.g. NF-YA1) (Ref.2). Lost ability to develop roots from nodules (Ref.2).</text>
</comment>
<comment type="miscellaneous">
    <text evidence="13">Fruit abscission does not occur in Lotus japonicus.</text>
</comment>
<comment type="similarity">
    <text evidence="12">Belongs to the plant 'ANKYRIN-BTB/POZ' family. 'NOOT-BOP-COCH-like' (NBCL) subfamily.</text>
</comment>
<accession>G3LSH3</accession>
<organism>
    <name type="scientific">Lotus japonicus</name>
    <name type="common">Lotus corniculatus var. japonicus</name>
    <dbReference type="NCBI Taxonomy" id="34305"/>
    <lineage>
        <taxon>Eukaryota</taxon>
        <taxon>Viridiplantae</taxon>
        <taxon>Streptophyta</taxon>
        <taxon>Embryophyta</taxon>
        <taxon>Tracheophyta</taxon>
        <taxon>Spermatophyta</taxon>
        <taxon>Magnoliopsida</taxon>
        <taxon>eudicotyledons</taxon>
        <taxon>Gunneridae</taxon>
        <taxon>Pentapetalae</taxon>
        <taxon>rosids</taxon>
        <taxon>fabids</taxon>
        <taxon>Fabales</taxon>
        <taxon>Fabaceae</taxon>
        <taxon>Papilionoideae</taxon>
        <taxon>50 kb inversion clade</taxon>
        <taxon>NPAAA clade</taxon>
        <taxon>Hologalegina</taxon>
        <taxon>robinioid clade</taxon>
        <taxon>Loteae</taxon>
        <taxon>Lotus</taxon>
    </lineage>
</organism>
<feature type="chain" id="PRO_0000460403" description="BTB/POZ domain and ankyrin repeat-containing protein NBCL">
    <location>
        <begin position="1"/>
        <end position="483"/>
    </location>
</feature>
<feature type="domain" description="BTB" evidence="4">
    <location>
        <begin position="25"/>
        <end position="109"/>
    </location>
</feature>
<feature type="repeat" description="ANK 1" evidence="3">
    <location>
        <begin position="254"/>
        <end position="283"/>
    </location>
</feature>
<feature type="repeat" description="ANK 2" evidence="3">
    <location>
        <begin position="284"/>
        <end position="313"/>
    </location>
</feature>
<feature type="repeat" description="ANK 3" evidence="3">
    <location>
        <begin position="318"/>
        <end position="347"/>
    </location>
</feature>
<feature type="repeat" description="ANK 4" evidence="14">
    <location>
        <begin position="351"/>
        <end position="385"/>
    </location>
</feature>
<feature type="zinc finger region" description="C2HC NPR-type" evidence="5">
    <location>
        <begin position="115"/>
        <end position="129"/>
    </location>
</feature>
<feature type="region of interest" description="Disordered" evidence="6">
    <location>
        <begin position="401"/>
        <end position="437"/>
    </location>
</feature>
<feature type="compositionally biased region" description="Low complexity" evidence="6">
    <location>
        <begin position="403"/>
        <end position="419"/>
    </location>
</feature>
<feature type="binding site" evidence="5">
    <location>
        <position position="118"/>
    </location>
    <ligand>
        <name>Zn(2+)</name>
        <dbReference type="ChEBI" id="CHEBI:29105"/>
    </ligand>
</feature>
<feature type="binding site" evidence="5">
    <location>
        <position position="123"/>
    </location>
    <ligand>
        <name>Zn(2+)</name>
        <dbReference type="ChEBI" id="CHEBI:29105"/>
    </ligand>
</feature>
<feature type="binding site" evidence="5">
    <location>
        <position position="125"/>
    </location>
    <ligand>
        <name>Zn(2+)</name>
        <dbReference type="ChEBI" id="CHEBI:29105"/>
    </ligand>
</feature>
<feature type="binding site" evidence="5">
    <location>
        <position position="128"/>
    </location>
    <ligand>
        <name>Zn(2+)</name>
        <dbReference type="ChEBI" id="CHEBI:29105"/>
    </ligand>
</feature>